<dbReference type="EMBL" id="JR971508">
    <property type="status" value="NOT_ANNOTATED_CDS"/>
    <property type="molecule type" value="mRNA"/>
</dbReference>
<dbReference type="SMR" id="B8VIX3"/>
<dbReference type="OrthoDB" id="10315533at2759"/>
<dbReference type="GO" id="GO:0005576">
    <property type="term" value="C:extracellular region"/>
    <property type="evidence" value="ECO:0007669"/>
    <property type="project" value="UniProtKB-SubCell"/>
</dbReference>
<dbReference type="Gene3D" id="1.20.120.20">
    <property type="entry name" value="Apolipoprotein"/>
    <property type="match status" value="1"/>
</dbReference>
<organism>
    <name type="scientific">Acropora millepora</name>
    <name type="common">Staghorn coral</name>
    <name type="synonym">Heteropora millepora</name>
    <dbReference type="NCBI Taxonomy" id="45264"/>
    <lineage>
        <taxon>Eukaryota</taxon>
        <taxon>Metazoa</taxon>
        <taxon>Cnidaria</taxon>
        <taxon>Anthozoa</taxon>
        <taxon>Hexacorallia</taxon>
        <taxon>Scleractinia</taxon>
        <taxon>Astrocoeniina</taxon>
        <taxon>Acroporidae</taxon>
        <taxon>Acropora</taxon>
    </lineage>
</organism>
<evidence type="ECO:0000255" key="1"/>
<evidence type="ECO:0000256" key="2">
    <source>
        <dbReference type="SAM" id="MobiDB-lite"/>
    </source>
</evidence>
<evidence type="ECO:0000269" key="3">
    <source>
    </source>
</evidence>
<evidence type="ECO:0000303" key="4">
    <source>
    </source>
</evidence>
<evidence type="ECO:0000305" key="5"/>
<evidence type="ECO:0000305" key="6">
    <source>
    </source>
</evidence>
<accession>B8VIX3</accession>
<name>USOM6_ACRMI</name>
<feature type="signal peptide" evidence="1">
    <location>
        <begin position="1"/>
        <end position="20"/>
    </location>
</feature>
<feature type="chain" id="PRO_0000429760" description="Uncharacterized skeletal organic matrix protein 6" evidence="1">
    <location>
        <begin position="21"/>
        <end position="436"/>
    </location>
</feature>
<feature type="region of interest" description="Disordered" evidence="2">
    <location>
        <begin position="371"/>
        <end position="419"/>
    </location>
</feature>
<feature type="coiled-coil region" evidence="1">
    <location>
        <begin position="25"/>
        <end position="87"/>
    </location>
</feature>
<feature type="coiled-coil region" evidence="1">
    <location>
        <begin position="154"/>
        <end position="207"/>
    </location>
</feature>
<feature type="coiled-coil region" evidence="1">
    <location>
        <begin position="247"/>
        <end position="329"/>
    </location>
</feature>
<feature type="compositionally biased region" description="Acidic residues" evidence="2">
    <location>
        <begin position="371"/>
        <end position="390"/>
    </location>
</feature>
<feature type="compositionally biased region" description="Basic and acidic residues" evidence="2">
    <location>
        <begin position="404"/>
        <end position="415"/>
    </location>
</feature>
<sequence length="436" mass="50165">MKCAVAILLVCLTLQQAAYGFLYNEEVKTEFQRRKQSLEEAGESLKQMGQNLQDNMQRSLAEGQEALQKHIKNLQQSMLSQKEALRNRGEALRETVGERLESMQNQGKDWMKKMQEGRETLQKKLGEQVETFNQTFQAGRLAIAKKVLEGSETMRKTIQNTTQSLQDKAEKVQETAGKNVEALKLIARKNALSLKESLDTLRENSVEENMQALRNFLPSQSEAMDLPKEKLQELMASIQNNTGLFQESWGQEKEKMKEMLRGLKRKVGERTEDMKRKMKARKEELEAEFQSRGDEAVQTVMEIRNVTIKHLREAGKKIKEIEEKIASLLPNSCLDFLRSKALKMGVKIVVQDLKSVFRMGWLRVPETFEKEEEIAPSTEEDGSEELEADSYDSKVGGESPISQRTEERQGAEERSRLRRRRAAVLRRMFGQWSRKS</sequence>
<comment type="subcellular location">
    <subcellularLocation>
        <location evidence="6">Secreted</location>
    </subcellularLocation>
</comment>
<comment type="tissue specificity">
    <text evidence="3">Component of the acid-insoluble organic matrix of the aragonitic skeleton (at protein level).</text>
</comment>
<reference evidence="5" key="1">
    <citation type="journal article" date="2012" name="Mol. Ecol.">
        <title>Whole transcriptome analysis of the coral Acropora millepora reveals complex responses to CO(2)-driven acidification during the initiation of calcification.</title>
        <authorList>
            <person name="Moya A."/>
            <person name="Huisman L."/>
            <person name="Ball E.E."/>
            <person name="Hayward D.C."/>
            <person name="Grasso L.C."/>
            <person name="Chua C.M."/>
            <person name="Woo H.N."/>
            <person name="Gattuso J.P."/>
            <person name="Foret S."/>
            <person name="Miller D.J."/>
        </authorList>
    </citation>
    <scope>NUCLEOTIDE SEQUENCE [MRNA]</scope>
</reference>
<reference evidence="5" key="2">
    <citation type="journal article" date="2013" name="Mol. Biol. Evol.">
        <title>The skeletal proteome of the coral Acropora millepora: the evolution of calcification by co-option and domain shuffling.</title>
        <authorList>
            <person name="Ramos-Silva P."/>
            <person name="Kaandorp J."/>
            <person name="Huisman L."/>
            <person name="Marie B."/>
            <person name="Zanella-Cleon I."/>
            <person name="Guichard N."/>
            <person name="Miller D.J."/>
            <person name="Marin F."/>
        </authorList>
    </citation>
    <scope>PROTEIN SEQUENCE OF 214-229 AND 292-305</scope>
    <scope>TISSUE SPECIFICITY</scope>
    <scope>IDENTIFICATION BY MASS SPECTROMETRY</scope>
</reference>
<protein>
    <recommendedName>
        <fullName evidence="4">Uncharacterized skeletal organic matrix protein 6</fullName>
        <shortName evidence="4">Uncharacterized SOMP-6</shortName>
    </recommendedName>
</protein>
<proteinExistence type="evidence at protein level"/>
<keyword id="KW-0175">Coiled coil</keyword>
<keyword id="KW-0903">Direct protein sequencing</keyword>
<keyword id="KW-0964">Secreted</keyword>
<keyword id="KW-0732">Signal</keyword>